<keyword id="KW-0045">Antibiotic biosynthesis</keyword>
<keyword id="KW-0408">Iron</keyword>
<keyword id="KW-0479">Metal-binding</keyword>
<keyword id="KW-0520">NAD</keyword>
<keyword id="KW-0560">Oxidoreductase</keyword>
<keyword id="KW-1185">Reference proteome</keyword>
<name>PHPC_STRVT</name>
<protein>
    <recommendedName>
        <fullName>Phosphonoacetaldehyde reductase</fullName>
        <ecNumber evidence="2">1.1.1.309</ecNumber>
    </recommendedName>
</protein>
<accession>D9XF45</accession>
<accession>Q5IW41</accession>
<reference key="1">
    <citation type="journal article" date="1996" name="Appl. Environ. Microbiol.">
        <title>The peptide synthetase gene phsA from Streptomyces viridochromogenes is not juxtaposed with other genes involved in nonribosomal biosynthesis of peptides.</title>
        <authorList>
            <person name="Schwartz D."/>
            <person name="Alijah R."/>
            <person name="Nussbaumer B."/>
            <person name="Pelzer S."/>
            <person name="Wohlleben W."/>
        </authorList>
    </citation>
    <scope>NUCLEOTIDE SEQUENCE [GENOMIC DNA]</scope>
    <source>
        <strain>DSM 40736 / JCM 4977 / BCRC 1201 / Tue 494</strain>
    </source>
</reference>
<reference key="2">
    <citation type="journal article" date="2005" name="Antimicrob. Agents Chemother.">
        <title>Molecular cloning, sequence analysis, and heterologous expression of the phosphinothricin tripeptide biosynthetic gene cluster from Streptomyces viridochromogenes DSM 40736.</title>
        <authorList>
            <person name="Blodgett J.A."/>
            <person name="Zhang J.K."/>
            <person name="Metcalf W.W."/>
        </authorList>
    </citation>
    <scope>NUCLEOTIDE SEQUENCE [GENOMIC DNA]</scope>
    <source>
        <strain>DSM 40736 / JCM 4977 / BCRC 1201 / Tue 494</strain>
    </source>
</reference>
<reference key="3">
    <citation type="submission" date="2009-02" db="EMBL/GenBank/DDBJ databases">
        <title>Annotation of Streptomyces viridochromogenes strain DSM 40736.</title>
        <authorList>
            <consortium name="The Broad Institute Genome Sequencing Platform"/>
            <consortium name="Broad Institute Microbial Sequencing Center"/>
            <person name="Fischbach M."/>
            <person name="Godfrey P."/>
            <person name="Ward D."/>
            <person name="Young S."/>
            <person name="Zeng Q."/>
            <person name="Koehrsen M."/>
            <person name="Alvarado L."/>
            <person name="Berlin A.M."/>
            <person name="Bochicchio J."/>
            <person name="Borenstein D."/>
            <person name="Chapman S.B."/>
            <person name="Chen Z."/>
            <person name="Engels R."/>
            <person name="Freedman E."/>
            <person name="Gellesch M."/>
            <person name="Goldberg J."/>
            <person name="Griggs A."/>
            <person name="Gujja S."/>
            <person name="Heilman E.R."/>
            <person name="Heiman D.I."/>
            <person name="Hepburn T.A."/>
            <person name="Howarth C."/>
            <person name="Jen D."/>
            <person name="Larson L."/>
            <person name="Lewis B."/>
            <person name="Mehta T."/>
            <person name="Park D."/>
            <person name="Pearson M."/>
            <person name="Richards J."/>
            <person name="Roberts A."/>
            <person name="Saif S."/>
            <person name="Shea T.D."/>
            <person name="Shenoy N."/>
            <person name="Sisk P."/>
            <person name="Stolte C."/>
            <person name="Sykes S.N."/>
            <person name="Thomson T."/>
            <person name="Walk T."/>
            <person name="White J."/>
            <person name="Yandava C."/>
            <person name="Straight P."/>
            <person name="Clardy J."/>
            <person name="Hung D."/>
            <person name="Kolter R."/>
            <person name="Mekalanos J."/>
            <person name="Walker S."/>
            <person name="Walsh C.T."/>
            <person name="Wieland-Brown L.C."/>
            <person name="Haas B."/>
            <person name="Nusbaum C."/>
            <person name="Birren B."/>
        </authorList>
    </citation>
    <scope>NUCLEOTIDE SEQUENCE [LARGE SCALE GENOMIC DNA]</scope>
    <source>
        <strain>DSM 40736 / JCM 4977 / BCRC 1201 / Tue 494</strain>
    </source>
</reference>
<reference key="4">
    <citation type="journal article" date="2007" name="Nat. Chem. Biol.">
        <title>Unusual transformations in the biosynthesis of the antibiotic phosphinothricin tripeptide.</title>
        <authorList>
            <person name="Blodgett J.A."/>
            <person name="Thomas P.M."/>
            <person name="Li G."/>
            <person name="Velasquez J.E."/>
            <person name="van der Donk W.A."/>
            <person name="Kelleher N.L."/>
            <person name="Metcalf W.W."/>
        </authorList>
    </citation>
    <scope>FUNCTION</scope>
    <scope>CATALYTIC ACTIVITY</scope>
    <scope>PATHWAY</scope>
    <scope>DISRUPTION PHENOTYPE</scope>
    <source>
        <strain>DSM 40736 / JCM 4977 / BCRC 1201 / Tue 494</strain>
    </source>
</reference>
<dbReference type="EC" id="1.1.1.309" evidence="2"/>
<dbReference type="EMBL" id="X65195">
    <property type="protein sequence ID" value="CAJ14041.1"/>
    <property type="molecule type" value="Genomic_DNA"/>
</dbReference>
<dbReference type="EMBL" id="AY632421">
    <property type="protein sequence ID" value="AAU00078.1"/>
    <property type="molecule type" value="Genomic_DNA"/>
</dbReference>
<dbReference type="EMBL" id="GG657757">
    <property type="protein sequence ID" value="EFL30524.1"/>
    <property type="molecule type" value="Genomic_DNA"/>
</dbReference>
<dbReference type="RefSeq" id="WP_003988639.1">
    <property type="nucleotide sequence ID" value="NZ_GG657757.1"/>
</dbReference>
<dbReference type="SMR" id="D9XF45"/>
<dbReference type="STRING" id="591159.SSQG_01042"/>
<dbReference type="KEGG" id="ag:AAU00078"/>
<dbReference type="eggNOG" id="COG1454">
    <property type="taxonomic scope" value="Bacteria"/>
</dbReference>
<dbReference type="HOGENOM" id="CLU_007207_0_0_11"/>
<dbReference type="OrthoDB" id="323926at2"/>
<dbReference type="BioCyc" id="MetaCyc:MONOMER-15039"/>
<dbReference type="UniPathway" id="UPA00197"/>
<dbReference type="Proteomes" id="UP000004184">
    <property type="component" value="Unassembled WGS sequence"/>
</dbReference>
<dbReference type="GO" id="GO:0004022">
    <property type="term" value="F:alcohol dehydrogenase (NAD+) activity"/>
    <property type="evidence" value="ECO:0007669"/>
    <property type="project" value="TreeGrafter"/>
</dbReference>
<dbReference type="GO" id="GO:0046872">
    <property type="term" value="F:metal ion binding"/>
    <property type="evidence" value="ECO:0007669"/>
    <property type="project" value="UniProtKB-KW"/>
</dbReference>
<dbReference type="GO" id="GO:0017000">
    <property type="term" value="P:antibiotic biosynthetic process"/>
    <property type="evidence" value="ECO:0007669"/>
    <property type="project" value="UniProtKB-KW"/>
</dbReference>
<dbReference type="CDD" id="cd08182">
    <property type="entry name" value="HEPD"/>
    <property type="match status" value="1"/>
</dbReference>
<dbReference type="Gene3D" id="3.40.50.1970">
    <property type="match status" value="1"/>
</dbReference>
<dbReference type="Gene3D" id="1.20.1090.10">
    <property type="entry name" value="Dehydroquinate synthase-like - alpha domain"/>
    <property type="match status" value="1"/>
</dbReference>
<dbReference type="InterPro" id="IPR001670">
    <property type="entry name" value="ADH_Fe/GldA"/>
</dbReference>
<dbReference type="InterPro" id="IPR056798">
    <property type="entry name" value="ADH_Fe_C"/>
</dbReference>
<dbReference type="InterPro" id="IPR039697">
    <property type="entry name" value="Alcohol_dehydrogenase_Fe"/>
</dbReference>
<dbReference type="InterPro" id="IPR035873">
    <property type="entry name" value="PhpC"/>
</dbReference>
<dbReference type="PANTHER" id="PTHR11496">
    <property type="entry name" value="ALCOHOL DEHYDROGENASE"/>
    <property type="match status" value="1"/>
</dbReference>
<dbReference type="PANTHER" id="PTHR11496:SF103">
    <property type="entry name" value="DEHYDROGENASE, PUTATIVE-RELATED"/>
    <property type="match status" value="1"/>
</dbReference>
<dbReference type="Pfam" id="PF25137">
    <property type="entry name" value="ADH_Fe_C"/>
    <property type="match status" value="1"/>
</dbReference>
<dbReference type="Pfam" id="PF00465">
    <property type="entry name" value="Fe-ADH"/>
    <property type="match status" value="1"/>
</dbReference>
<dbReference type="SUPFAM" id="SSF56796">
    <property type="entry name" value="Dehydroquinate synthase-like"/>
    <property type="match status" value="1"/>
</dbReference>
<gene>
    <name type="primary">phpC</name>
    <name type="synonym">adhP</name>
    <name type="ORF">SSQG_01042</name>
</gene>
<organism>
    <name type="scientific">Streptomyces viridochromogenes (strain DSM 40736 / JCM 4977 / BCRC 1201 / Tue 494)</name>
    <dbReference type="NCBI Taxonomy" id="591159"/>
    <lineage>
        <taxon>Bacteria</taxon>
        <taxon>Bacillati</taxon>
        <taxon>Actinomycetota</taxon>
        <taxon>Actinomycetes</taxon>
        <taxon>Kitasatosporales</taxon>
        <taxon>Streptomycetaceae</taxon>
        <taxon>Streptomyces</taxon>
    </lineage>
</organism>
<proteinExistence type="evidence at protein level"/>
<evidence type="ECO:0000250" key="1"/>
<evidence type="ECO:0000269" key="2">
    <source>
    </source>
</evidence>
<evidence type="ECO:0000305" key="3"/>
<evidence type="ECO:0000305" key="4">
    <source>
    </source>
</evidence>
<sequence>MTAVFPGELLLAEGIHEIARVTALLSGPLRRAPRVAQVVGPGFAGRPWAPRLTDALRPLDPTVVVHDGPTTPDSVAALARQLRAIRADVAVAIGGGTVMDAAKAAAALADGGPPDADRVRQACAAGPAAGDTPPAVRVVAVPTTAGTGAEATPFATLWDLKHRRKLSLTGPRVRPSAAVLAPELLAGLGRRALATGILDALCQGAEASWSIRSTPESIRWGTSAVTLAAEALDQVQDDAPDAAARLALQRAAHHSGRAIALAQTSSCHAISYPLTLRLGLAHGHACGVTLGRLLRYNHAVPAGDCADPRGTGHVRRVLDALAAPLGGTPARAALRVERFITACGLTPYDALDVDHRSLAAEAVTYPRCHDNPRRLDRESLGRLLGERSEMEETCG</sequence>
<feature type="chain" id="PRO_0000418762" description="Phosphonoacetaldehyde reductase">
    <location>
        <begin position="1"/>
        <end position="395"/>
    </location>
</feature>
<feature type="binding site" evidence="1">
    <location>
        <position position="199"/>
    </location>
    <ligand>
        <name>Fe cation</name>
        <dbReference type="ChEBI" id="CHEBI:24875"/>
    </ligand>
</feature>
<feature type="binding site" evidence="1">
    <location>
        <position position="268"/>
    </location>
    <ligand>
        <name>Fe cation</name>
        <dbReference type="ChEBI" id="CHEBI:24875"/>
    </ligand>
</feature>
<feature type="binding site" evidence="1">
    <location>
        <position position="282"/>
    </location>
    <ligand>
        <name>Fe cation</name>
        <dbReference type="ChEBI" id="CHEBI:24875"/>
    </ligand>
</feature>
<comment type="function">
    <text evidence="2">Catalyzes the reduction of phosphonoacetaldehyde to 2-hydroxyethylphosphonate, a step in the biosynthesis of phosphinothricin tripeptide. Phosphinothricin tripeptide (PTT), also known as bialaphos (BA), is a natural-product antibiotic and potent herbicide. Can use both NAD and NADP but the preferred substrate is NAD.</text>
</comment>
<comment type="catalytic activity">
    <reaction evidence="2">
        <text>2-hydroxyethylphosphonate + NAD(+) = phosphonoacetaldehyde + NADH + H(+)</text>
        <dbReference type="Rhea" id="RHEA:28078"/>
        <dbReference type="ChEBI" id="CHEBI:15378"/>
        <dbReference type="ChEBI" id="CHEBI:57540"/>
        <dbReference type="ChEBI" id="CHEBI:57945"/>
        <dbReference type="ChEBI" id="CHEBI:58383"/>
        <dbReference type="ChEBI" id="CHEBI:60991"/>
        <dbReference type="EC" id="1.1.1.309"/>
    </reaction>
</comment>
<comment type="cofactor">
    <cofactor evidence="1">
        <name>Fe cation</name>
        <dbReference type="ChEBI" id="CHEBI:24875"/>
    </cofactor>
</comment>
<comment type="pathway">
    <text evidence="2 4">Secondary metabolite biosynthesis; bialaphos biosynthesis.</text>
</comment>
<comment type="disruption phenotype">
    <text evidence="2">Cells retain the ability to produce phosphinothricin tripeptide when grown in liquid culture but, the amount of PTT produced is lower.</text>
</comment>
<comment type="similarity">
    <text evidence="3">Belongs to the iron-containing alcohol dehydrogenase family.</text>
</comment>